<reference key="1">
    <citation type="journal article" date="2011" name="J. Exp. Biol.">
        <title>A diverse family of novel peptide toxins from an unusual cone snail, Conus californicus.</title>
        <authorList>
            <person name="Gilly W.F."/>
            <person name="Richmond T.A."/>
            <person name="Duda T.F. Jr."/>
            <person name="Elliger C."/>
            <person name="Lebaric Z."/>
            <person name="Schulz J."/>
            <person name="Bingham J.P."/>
            <person name="Sweedler J.V."/>
        </authorList>
    </citation>
    <scope>NUCLEOTIDE SEQUENCE [MRNA]</scope>
    <source>
        <tissue>Venom duct</tissue>
    </source>
</reference>
<organism>
    <name type="scientific">Californiconus californicus</name>
    <name type="common">California cone</name>
    <name type="synonym">Conus californicus</name>
    <dbReference type="NCBI Taxonomy" id="1736779"/>
    <lineage>
        <taxon>Eukaryota</taxon>
        <taxon>Metazoa</taxon>
        <taxon>Spiralia</taxon>
        <taxon>Lophotrochozoa</taxon>
        <taxon>Mollusca</taxon>
        <taxon>Gastropoda</taxon>
        <taxon>Caenogastropoda</taxon>
        <taxon>Neogastropoda</taxon>
        <taxon>Conoidea</taxon>
        <taxon>Conidae</taxon>
        <taxon>Californiconus</taxon>
    </lineage>
</organism>
<dbReference type="EMBL" id="EF644182">
    <property type="protein sequence ID" value="ABR92952.1"/>
    <property type="molecule type" value="mRNA"/>
</dbReference>
<dbReference type="ConoServer" id="800">
    <property type="toxin name" value="Cal12.1.2a"/>
</dbReference>
<dbReference type="GO" id="GO:0005576">
    <property type="term" value="C:extracellular region"/>
    <property type="evidence" value="ECO:0007669"/>
    <property type="project" value="UniProtKB-SubCell"/>
</dbReference>
<dbReference type="GO" id="GO:0099106">
    <property type="term" value="F:ion channel regulator activity"/>
    <property type="evidence" value="ECO:0007669"/>
    <property type="project" value="UniProtKB-KW"/>
</dbReference>
<dbReference type="GO" id="GO:0090729">
    <property type="term" value="F:toxin activity"/>
    <property type="evidence" value="ECO:0007669"/>
    <property type="project" value="UniProtKB-KW"/>
</dbReference>
<protein>
    <recommendedName>
        <fullName>Mu-conotoxin-like Cal 12.1.2a</fullName>
    </recommendedName>
    <alternativeName>
        <fullName>Conotoxin CalTx 12.1.2B</fullName>
    </alternativeName>
</protein>
<proteinExistence type="evidence at transcript level"/>
<name>COC2A_CONCL</name>
<accession>A6YR28</accession>
<comment type="function">
    <text evidence="1">Mu-conotoxins block voltage-gated sodium channels. This toxin reversibly blocks voltage-gated sodium channel in cephalopods, with no alteration in the voltage dependence of sodium conductance or on the kinetics of inactivation (By similarity).</text>
</comment>
<comment type="subcellular location">
    <subcellularLocation>
        <location evidence="1">Secreted</location>
    </subcellularLocation>
</comment>
<comment type="tissue specificity">
    <text>Expressed by the venom duct.</text>
</comment>
<comment type="domain">
    <text>The cysteine framework is XII (C-C-C-C-CC-C-C).</text>
</comment>
<feature type="peptide" id="PRO_0000392269" description="Mu-conotoxin-like Cal 12.1.2a">
    <location>
        <begin position="1"/>
        <end position="45"/>
    </location>
</feature>
<feature type="modified residue" description="4-hydroxyproline" evidence="1">
    <location>
        <position position="23"/>
    </location>
</feature>
<feature type="modified residue" description="6'-bromotryptophan" evidence="1">
    <location>
        <position position="37"/>
    </location>
</feature>
<feature type="modified residue" description="6'-bromotryptophan" evidence="1">
    <location>
        <position position="38"/>
    </location>
</feature>
<feature type="modified residue" description="4-hydroxyproline" evidence="1">
    <location>
        <position position="40"/>
    </location>
</feature>
<feature type="modified residue" description="6'-bromotryptophan" evidence="1">
    <location>
        <position position="44"/>
    </location>
</feature>
<feature type="disulfide bond" evidence="2">
    <location>
        <begin position="3"/>
        <end position="16"/>
    </location>
</feature>
<feature type="disulfide bond" evidence="1">
    <location>
        <begin position="11"/>
        <end position="28"/>
    </location>
</feature>
<feature type="disulfide bond" evidence="1">
    <location>
        <begin position="18"/>
        <end position="33"/>
    </location>
</feature>
<feature type="disulfide bond" evidence="1">
    <location>
        <begin position="27"/>
        <end position="39"/>
    </location>
</feature>
<evidence type="ECO:0000250" key="1"/>
<evidence type="ECO:0000305" key="2"/>
<sequence length="45" mass="4996">DVCDSLVDGRCIHNGCFCERDAPNGNCCDTDGCTARWWCPGTKWD</sequence>
<keyword id="KW-0102">Bromination</keyword>
<keyword id="KW-1015">Disulfide bond</keyword>
<keyword id="KW-0379">Hydroxylation</keyword>
<keyword id="KW-0872">Ion channel impairing toxin</keyword>
<keyword id="KW-0528">Neurotoxin</keyword>
<keyword id="KW-0964">Secreted</keyword>
<keyword id="KW-0800">Toxin</keyword>